<feature type="chain" id="PRO_0000226590" description="Superoxide dismutase [Mn/Fe]">
    <location>
        <begin position="1"/>
        <end position="199"/>
    </location>
</feature>
<feature type="binding site" evidence="2">
    <location>
        <position position="27"/>
    </location>
    <ligand>
        <name>Fe(3+)</name>
        <dbReference type="ChEBI" id="CHEBI:29034"/>
    </ligand>
</feature>
<feature type="binding site" evidence="2">
    <location>
        <position position="27"/>
    </location>
    <ligand>
        <name>Mn(2+)</name>
        <dbReference type="ChEBI" id="CHEBI:29035"/>
    </ligand>
</feature>
<feature type="binding site" evidence="2">
    <location>
        <position position="81"/>
    </location>
    <ligand>
        <name>Fe(3+)</name>
        <dbReference type="ChEBI" id="CHEBI:29034"/>
    </ligand>
</feature>
<feature type="binding site" evidence="2">
    <location>
        <position position="81"/>
    </location>
    <ligand>
        <name>Mn(2+)</name>
        <dbReference type="ChEBI" id="CHEBI:29035"/>
    </ligand>
</feature>
<feature type="binding site" evidence="2">
    <location>
        <position position="161"/>
    </location>
    <ligand>
        <name>Fe(3+)</name>
        <dbReference type="ChEBI" id="CHEBI:29034"/>
    </ligand>
</feature>
<feature type="binding site" evidence="2">
    <location>
        <position position="161"/>
    </location>
    <ligand>
        <name>Mn(2+)</name>
        <dbReference type="ChEBI" id="CHEBI:29035"/>
    </ligand>
</feature>
<feature type="binding site" evidence="2">
    <location>
        <position position="165"/>
    </location>
    <ligand>
        <name>Fe(3+)</name>
        <dbReference type="ChEBI" id="CHEBI:29034"/>
    </ligand>
</feature>
<feature type="binding site" evidence="2">
    <location>
        <position position="165"/>
    </location>
    <ligand>
        <name>Mn(2+)</name>
        <dbReference type="ChEBI" id="CHEBI:29035"/>
    </ligand>
</feature>
<feature type="sequence variant" description="In strain: CS6.">
    <original>GF</original>
    <variation>AY</variation>
    <location>
        <begin position="11"/>
        <end position="12"/>
    </location>
</feature>
<feature type="sequence variant" description="In strain: 5SI5K.">
    <original>F</original>
    <variation>C</variation>
    <location>
        <position position="12"/>
    </location>
</feature>
<feature type="sequence variant" description="In strain: NEM2021.">
    <original>T</original>
    <variation>P</variation>
    <location>
        <position position="23"/>
    </location>
</feature>
<feature type="sequence variant" description="In strain: 5SI5K.">
    <original>E</original>
    <variation>V</variation>
    <location>
        <position position="25"/>
    </location>
</feature>
<feature type="sequence variant" description="In strain: S087.">
    <original>V</original>
    <variation>I</variation>
    <location>
        <position position="43"/>
    </location>
</feature>
<feature type="sequence variant" description="In strain: S087.">
    <original>D</original>
    <variation>G</variation>
    <location>
        <position position="61"/>
    </location>
</feature>
<feature type="sequence variant" description="In strain: NEM2021.">
    <original>G</original>
    <variation>D</variation>
    <location>
        <position position="96"/>
    </location>
</feature>
<feature type="sequence variant" description="In strain: NEM2022.">
    <original>Q</original>
    <variation>H</variation>
    <location>
        <position position="105"/>
    </location>
</feature>
<feature type="sequence variant" description="In strain: 1K07.">
    <original>A</original>
    <variation>T</variation>
    <location>
        <position position="111"/>
    </location>
</feature>
<feature type="sequence variant" description="In strain: A4065G.">
    <original>D</original>
    <variation>V</variation>
    <location>
        <position position="147"/>
    </location>
</feature>
<feature type="sequence variant" description="In strain: A4065G.">
    <original>IT</original>
    <variation>MN</variation>
    <location>
        <begin position="150"/>
        <end position="151"/>
    </location>
</feature>
<feature type="sequence variant" description="In strain: C4068G.">
    <original>I</original>
    <variation>M</variation>
    <location>
        <position position="150"/>
    </location>
</feature>
<feature type="sequence variant" description="In strain: 42M06.">
    <original>A</original>
    <variation>S</variation>
    <location>
        <position position="181"/>
    </location>
</feature>
<feature type="sequence variant" description="In strain: 41M06.">
    <original>E</original>
    <variation>G</variation>
    <location>
        <position position="189"/>
    </location>
</feature>
<feature type="sequence conflict" description="In Ref. 2; AAS78509." evidence="6" ref="2">
    <original>Y</original>
    <variation>F</variation>
    <location>
        <position position="10"/>
    </location>
</feature>
<evidence type="ECO:0000250" key="1"/>
<evidence type="ECO:0000250" key="2">
    <source>
        <dbReference type="UniProtKB" id="P80293"/>
    </source>
</evidence>
<evidence type="ECO:0000269" key="3">
    <source>
    </source>
</evidence>
<evidence type="ECO:0000269" key="4">
    <source>
    </source>
</evidence>
<evidence type="ECO:0000303" key="5">
    <source>
    </source>
</evidence>
<evidence type="ECO:0000305" key="6"/>
<evidence type="ECO:0000305" key="7">
    <source>
    </source>
</evidence>
<dbReference type="EC" id="1.15.1.1" evidence="7"/>
<dbReference type="EMBL" id="AJ276960">
    <property type="protein sequence ID" value="CAB95744.1"/>
    <property type="molecule type" value="Genomic_DNA"/>
</dbReference>
<dbReference type="EMBL" id="AY571678">
    <property type="protein sequence ID" value="AAS78509.1"/>
    <property type="molecule type" value="Genomic_DNA"/>
</dbReference>
<dbReference type="EMBL" id="AY571679">
    <property type="protein sequence ID" value="AAS78510.1"/>
    <property type="molecule type" value="Genomic_DNA"/>
</dbReference>
<dbReference type="EMBL" id="AY571680">
    <property type="protein sequence ID" value="AAS78511.1"/>
    <property type="molecule type" value="Genomic_DNA"/>
</dbReference>
<dbReference type="EMBL" id="AY571681">
    <property type="protein sequence ID" value="AAS78512.1"/>
    <property type="molecule type" value="Genomic_DNA"/>
</dbReference>
<dbReference type="EMBL" id="AY571682">
    <property type="protein sequence ID" value="AAS78513.1"/>
    <property type="molecule type" value="Genomic_DNA"/>
</dbReference>
<dbReference type="EMBL" id="AY571683">
    <property type="protein sequence ID" value="AAS78514.1"/>
    <property type="molecule type" value="Genomic_DNA"/>
</dbReference>
<dbReference type="EMBL" id="AY571684">
    <property type="protein sequence ID" value="AAS78515.1"/>
    <property type="molecule type" value="Genomic_DNA"/>
</dbReference>
<dbReference type="EMBL" id="AY571685">
    <property type="protein sequence ID" value="AAS78516.1"/>
    <property type="molecule type" value="Genomic_DNA"/>
</dbReference>
<dbReference type="EMBL" id="AY571686">
    <property type="protein sequence ID" value="AAS78517.1"/>
    <property type="molecule type" value="Genomic_DNA"/>
</dbReference>
<dbReference type="EMBL" id="AY571687">
    <property type="protein sequence ID" value="AAS78518.1"/>
    <property type="molecule type" value="Genomic_DNA"/>
</dbReference>
<dbReference type="EMBL" id="AY571688">
    <property type="protein sequence ID" value="AAS78520.1"/>
    <property type="molecule type" value="Genomic_DNA"/>
</dbReference>
<dbReference type="EMBL" id="AY571689">
    <property type="protein sequence ID" value="AAS78522.1"/>
    <property type="molecule type" value="Genomic_DNA"/>
</dbReference>
<dbReference type="EMBL" id="AY571690">
    <property type="protein sequence ID" value="AAS78524.1"/>
    <property type="molecule type" value="Genomic_DNA"/>
</dbReference>
<dbReference type="EMBL" id="AY571691">
    <property type="protein sequence ID" value="AAS78526.1"/>
    <property type="molecule type" value="Genomic_DNA"/>
</dbReference>
<dbReference type="EMBL" id="AY571692">
    <property type="protein sequence ID" value="AAS78527.1"/>
    <property type="molecule type" value="Genomic_DNA"/>
</dbReference>
<dbReference type="EMBL" id="AY571693">
    <property type="protein sequence ID" value="AAS78529.1"/>
    <property type="molecule type" value="Genomic_DNA"/>
</dbReference>
<dbReference type="EMBL" id="AY571694">
    <property type="protein sequence ID" value="AAS78531.1"/>
    <property type="molecule type" value="Genomic_DNA"/>
</dbReference>
<dbReference type="EMBL" id="AY571697">
    <property type="protein sequence ID" value="AAS78534.1"/>
    <property type="molecule type" value="Genomic_DNA"/>
</dbReference>
<dbReference type="EMBL" id="AY571699">
    <property type="protein sequence ID" value="AAS78536.1"/>
    <property type="molecule type" value="Genomic_DNA"/>
</dbReference>
<dbReference type="EMBL" id="AY571700">
    <property type="protein sequence ID" value="AAS78537.1"/>
    <property type="molecule type" value="Genomic_DNA"/>
</dbReference>
<dbReference type="EMBL" id="AY571702">
    <property type="protein sequence ID" value="AAS78539.1"/>
    <property type="molecule type" value="Genomic_DNA"/>
</dbReference>
<dbReference type="EMBL" id="AY571703">
    <property type="protein sequence ID" value="AAS78540.1"/>
    <property type="molecule type" value="Genomic_DNA"/>
</dbReference>
<dbReference type="EMBL" id="AY571704">
    <property type="protein sequence ID" value="AAS78541.1"/>
    <property type="molecule type" value="Genomic_DNA"/>
</dbReference>
<dbReference type="EMBL" id="AY571705">
    <property type="protein sequence ID" value="AAS78542.1"/>
    <property type="molecule type" value="Genomic_DNA"/>
</dbReference>
<dbReference type="EMBL" id="AY571706">
    <property type="protein sequence ID" value="AAS78543.1"/>
    <property type="molecule type" value="Genomic_DNA"/>
</dbReference>
<dbReference type="EMBL" id="AY571707">
    <property type="protein sequence ID" value="AAS78544.1"/>
    <property type="molecule type" value="Genomic_DNA"/>
</dbReference>
<dbReference type="EMBL" id="AY485205">
    <property type="protein sequence ID" value="AAR83767.1"/>
    <property type="molecule type" value="Genomic_DNA"/>
</dbReference>
<dbReference type="EMBL" id="AY485206">
    <property type="protein sequence ID" value="AAR83768.1"/>
    <property type="molecule type" value="Genomic_DNA"/>
</dbReference>
<dbReference type="EMBL" id="AY485207">
    <property type="protein sequence ID" value="AAR83769.1"/>
    <property type="molecule type" value="Genomic_DNA"/>
</dbReference>
<dbReference type="EMBL" id="AJ343933">
    <property type="protein sequence ID" value="CAC86515.1"/>
    <property type="molecule type" value="Genomic_DNA"/>
</dbReference>
<dbReference type="EMBL" id="AJ343959">
    <property type="protein sequence ID" value="CAC86541.1"/>
    <property type="molecule type" value="Genomic_DNA"/>
</dbReference>
<dbReference type="EMBL" id="AJ343960">
    <property type="protein sequence ID" value="CAC86542.1"/>
    <property type="molecule type" value="Genomic_DNA"/>
</dbReference>
<dbReference type="RefSeq" id="WP_017724588.1">
    <property type="nucleotide sequence ID" value="NZ_BKAZ01000007.1"/>
</dbReference>
<dbReference type="SMR" id="Q9K4V3"/>
<dbReference type="STRING" id="1288.AWC37_05660"/>
<dbReference type="GeneID" id="79050275"/>
<dbReference type="eggNOG" id="COG0605">
    <property type="taxonomic scope" value="Bacteria"/>
</dbReference>
<dbReference type="OrthoDB" id="9803125at2"/>
<dbReference type="GO" id="GO:0005737">
    <property type="term" value="C:cytoplasm"/>
    <property type="evidence" value="ECO:0007669"/>
    <property type="project" value="TreeGrafter"/>
</dbReference>
<dbReference type="GO" id="GO:0046872">
    <property type="term" value="F:metal ion binding"/>
    <property type="evidence" value="ECO:0007669"/>
    <property type="project" value="UniProtKB-KW"/>
</dbReference>
<dbReference type="GO" id="GO:0004784">
    <property type="term" value="F:superoxide dismutase activity"/>
    <property type="evidence" value="ECO:0007669"/>
    <property type="project" value="UniProtKB-EC"/>
</dbReference>
<dbReference type="FunFam" id="1.10.287.990:FF:000001">
    <property type="entry name" value="Superoxide dismutase"/>
    <property type="match status" value="1"/>
</dbReference>
<dbReference type="FunFam" id="3.55.40.20:FF:000001">
    <property type="entry name" value="Superoxide dismutase"/>
    <property type="match status" value="1"/>
</dbReference>
<dbReference type="Gene3D" id="1.10.287.990">
    <property type="entry name" value="Fe,Mn superoxide dismutase (SOD) domain"/>
    <property type="match status" value="1"/>
</dbReference>
<dbReference type="Gene3D" id="3.55.40.20">
    <property type="entry name" value="Iron/manganese superoxide dismutase, C-terminal domain"/>
    <property type="match status" value="1"/>
</dbReference>
<dbReference type="InterPro" id="IPR001189">
    <property type="entry name" value="Mn/Fe_SOD"/>
</dbReference>
<dbReference type="InterPro" id="IPR019833">
    <property type="entry name" value="Mn/Fe_SOD_BS"/>
</dbReference>
<dbReference type="InterPro" id="IPR019832">
    <property type="entry name" value="Mn/Fe_SOD_C"/>
</dbReference>
<dbReference type="InterPro" id="IPR019831">
    <property type="entry name" value="Mn/Fe_SOD_N"/>
</dbReference>
<dbReference type="InterPro" id="IPR036324">
    <property type="entry name" value="Mn/Fe_SOD_N_sf"/>
</dbReference>
<dbReference type="InterPro" id="IPR036314">
    <property type="entry name" value="SOD_C_sf"/>
</dbReference>
<dbReference type="PANTHER" id="PTHR43595">
    <property type="entry name" value="37S RIBOSOMAL PROTEIN S26, MITOCHONDRIAL"/>
    <property type="match status" value="1"/>
</dbReference>
<dbReference type="PANTHER" id="PTHR43595:SF2">
    <property type="entry name" value="SMALL RIBOSOMAL SUBUNIT PROTEIN MS42"/>
    <property type="match status" value="1"/>
</dbReference>
<dbReference type="Pfam" id="PF02777">
    <property type="entry name" value="Sod_Fe_C"/>
    <property type="match status" value="1"/>
</dbReference>
<dbReference type="Pfam" id="PF00081">
    <property type="entry name" value="Sod_Fe_N"/>
    <property type="match status" value="1"/>
</dbReference>
<dbReference type="PIRSF" id="PIRSF000349">
    <property type="entry name" value="SODismutase"/>
    <property type="match status" value="1"/>
</dbReference>
<dbReference type="PRINTS" id="PR01703">
    <property type="entry name" value="MNSODISMTASE"/>
</dbReference>
<dbReference type="SUPFAM" id="SSF54719">
    <property type="entry name" value="Fe,Mn superoxide dismutase (SOD), C-terminal domain"/>
    <property type="match status" value="1"/>
</dbReference>
<dbReference type="SUPFAM" id="SSF46609">
    <property type="entry name" value="Fe,Mn superoxide dismutase (SOD), N-terminal domain"/>
    <property type="match status" value="1"/>
</dbReference>
<dbReference type="PROSITE" id="PS00088">
    <property type="entry name" value="SOD_MN"/>
    <property type="match status" value="1"/>
</dbReference>
<comment type="function">
    <text evidence="3 4">Destroys superoxide anion radicals which are normally produced within the cells and which are toxic to biological systems. Catalyzes the dismutation of superoxide anion radicals into O2 and H2O2 by successive reduction and oxidation of the transition metal ion at the active site. Also contributes to the inhibition of lipid oxidation. Manganese-preferring enzyme, less active with iron than with manganese.</text>
</comment>
<comment type="catalytic activity">
    <reaction evidence="7">
        <text>2 superoxide + 2 H(+) = H2O2 + O2</text>
        <dbReference type="Rhea" id="RHEA:20696"/>
        <dbReference type="ChEBI" id="CHEBI:15378"/>
        <dbReference type="ChEBI" id="CHEBI:15379"/>
        <dbReference type="ChEBI" id="CHEBI:16240"/>
        <dbReference type="ChEBI" id="CHEBI:18421"/>
        <dbReference type="EC" id="1.15.1.1"/>
    </reaction>
    <physiologicalReaction direction="left-to-right" evidence="7">
        <dbReference type="Rhea" id="RHEA:20697"/>
    </physiologicalReaction>
</comment>
<comment type="cofactor">
    <cofactor evidence="4">
        <name>Mn(2+)</name>
        <dbReference type="ChEBI" id="CHEBI:29035"/>
    </cofactor>
    <cofactor evidence="4">
        <name>Fe(3+)</name>
        <dbReference type="ChEBI" id="CHEBI:29034"/>
    </cofactor>
    <text evidence="4">Binds 1 Mn(2+) or Fe(3+) ion per subunit.</text>
</comment>
<comment type="subunit">
    <text evidence="1">Homodimer.</text>
</comment>
<comment type="induction">
    <text evidence="4">Transcription increases slightly by internally generated superoxide stress.</text>
</comment>
<comment type="miscellaneous">
    <text evidence="4">The levels of SOD activity and sodA expression were growth-phase dependent, occurring most during stationary phase. Expression is not affected by manganese. Is not essential for aerobic growth in complex medium.</text>
</comment>
<comment type="similarity">
    <text evidence="6">Belongs to the iron/manganese superoxide dismutase family.</text>
</comment>
<accession>Q9K4V3</accession>
<accession>Q6PXZ5</accession>
<accession>Q6PXZ6</accession>
<accession>Q6PXZ7</accession>
<accession>Q6PXZ8</accession>
<accession>Q6PY00</accession>
<accession>Q6PY03</accession>
<accession>Q6PY06</accession>
<accession>Q6PY21</accession>
<accession>Q6PY22</accession>
<accession>Q6PY24</accession>
<accession>Q6PY25</accession>
<accession>Q6PY27</accession>
<accession>Q6PY28</accession>
<accession>Q6RYX8</accession>
<accession>Q6RYX9</accession>
<accession>Q8VKW0</accession>
<accession>Q8VLZ4</accession>
<accession>Q8VLZ5</accession>
<name>SODM_STAXY</name>
<reference key="1">
    <citation type="journal article" date="2001" name="Appl. Environ. Microbiol.">
        <title>Characterization of the single superoxide dismutase of Staphylococcus xylosus.</title>
        <authorList>
            <person name="Barriere C."/>
            <person name="Brueckner R."/>
            <person name="Talon R."/>
        </authorList>
    </citation>
    <scope>NUCLEOTIDE SEQUENCE [GENOMIC DNA]</scope>
    <scope>FUNCTION</scope>
    <scope>CATALYTIC ACTIVITY</scope>
    <scope>INDUCTION</scope>
    <scope>COFACTOR</scope>
    <source>
        <strain>DSM 20267 / Isolate C2A</strain>
    </source>
</reference>
<reference key="2">
    <citation type="submission" date="2004-03" db="EMBL/GenBank/DDBJ databases">
        <title>Sequence polymorphism of Staphylococcus xylosus katA and sodA genes: detection of some atypical Staphylococcus xylosus strains.</title>
        <authorList>
            <person name="Blaiotta G."/>
            <person name="Fusco V."/>
            <person name="Ercolini D."/>
            <person name="Coppola S."/>
        </authorList>
    </citation>
    <scope>NUCLEOTIDE SEQUENCE [GENOMIC DNA]</scope>
    <source>
        <strain>1K07</strain>
        <strain>25K26</strain>
        <strain>41M06</strain>
        <strain>42M06</strain>
        <strain>5SI3K</strain>
        <strain>5SI4K</strain>
        <strain>5SI5K</strain>
        <strain>A4065G</strain>
        <strain>AS141</strain>
        <strain>ATCC 29971 / CIP 81.66 / DSM 20266 / JCM 2418 / LMG 20217 / NCTC 11043 / CCM 2738</strain>
        <strain>C4063G</strain>
        <strain>C4068G</strain>
        <strain>CS7</strain>
        <strain>DS20</strain>
        <strain>L11</strain>
        <strain>S022</strain>
        <strain>S087</strain>
        <strain>S734</strain>
        <strain>S878</strain>
        <strain>S892</strain>
        <strain>S904</strain>
        <strain>S935</strain>
        <strain>Sx011</strain>
        <strain>Sx1256</strain>
        <strain>Sx910</strain>
    </source>
</reference>
<reference key="3">
    <citation type="submission" date="2003-11" db="EMBL/GenBank/DDBJ databases">
        <title>Superoxide dismutase and catalase activities in coagulase-negative staphylococci (CNS) isolated from fermented dry sausages.</title>
        <authorList>
            <person name="Blaiotta G."/>
            <person name="Zinno P."/>
            <person name="Gianluigi M."/>
        </authorList>
    </citation>
    <scope>NUCLEOTIDE SEQUENCE [GENOMIC DNA] OF 9-159</scope>
    <source>
        <strain>41M06</strain>
        <strain>CS6</strain>
        <strain>DS20</strain>
    </source>
</reference>
<reference key="4">
    <citation type="journal article" date="2001" name="J. Clin. Microbiol.">
        <title>Rapid and accurate species-level identification of coagulase-negative staphylococci by using the sodA gene as a target.</title>
        <authorList>
            <person name="Poyart C."/>
            <person name="Quesne G."/>
            <person name="Boumaila C."/>
            <person name="Trieu-Cuot P."/>
        </authorList>
    </citation>
    <scope>NUCLEOTIDE SEQUENCE [GENOMIC DNA] OF 18-160</scope>
    <source>
        <strain>ATCC 29971 / CIP 81.66 / DSM 20266 / JCM 2418 / LMG 20217 / NCTC 11043 / CCM 2738</strain>
        <strain>NEM2021</strain>
        <strain>NEM2022</strain>
    </source>
</reference>
<reference key="5">
    <citation type="journal article" date="2001" name="FEMS Microbiol. Lett.">
        <title>Roles of superoxide dismutase and catalase of Staphylococcus xylosus in the inhibition of linoleic acid oxidation.</title>
        <authorList>
            <person name="Barriere C."/>
            <person name="Centeno D."/>
            <person name="Lebert A."/>
            <person name="Leroy-Setrin S."/>
            <person name="Berdague J.L."/>
            <person name="Talon R."/>
        </authorList>
    </citation>
    <scope>FUNCTION</scope>
    <source>
        <strain>DSM 20267 / Isolate C2A</strain>
    </source>
</reference>
<proteinExistence type="evidence at protein level"/>
<organism>
    <name type="scientific">Staphylococcus xylosus</name>
    <dbReference type="NCBI Taxonomy" id="1288"/>
    <lineage>
        <taxon>Bacteria</taxon>
        <taxon>Bacillati</taxon>
        <taxon>Bacillota</taxon>
        <taxon>Bacilli</taxon>
        <taxon>Bacillales</taxon>
        <taxon>Staphylococcaceae</taxon>
        <taxon>Staphylococcus</taxon>
    </lineage>
</organism>
<gene>
    <name type="primary">sodA</name>
    <name evidence="5" type="synonym">sod</name>
</gene>
<keyword id="KW-0408">Iron</keyword>
<keyword id="KW-0464">Manganese</keyword>
<keyword id="KW-0479">Metal-binding</keyword>
<keyword id="KW-0560">Oxidoreductase</keyword>
<keyword id="KW-0346">Stress response</keyword>
<protein>
    <recommendedName>
        <fullName>Superoxide dismutase [Mn/Fe]</fullName>
        <ecNumber evidence="7">1.15.1.1</ecNumber>
    </recommendedName>
</protein>
<sequence length="199" mass="22535">MAFELPNLPYGFDALEPHIDQQTMEIHHGKHHNTYVTKLNAAVEGTDLESKSIEEIVANLDSVPENIQTAVRNNGGGHLNHSLFWELLTPNSEEKGTVVDKIKEQWGSLDAFKEEFADKAAARFGSGWAWLVVNNGNLEIVTTPNQDNPITEGKTPILGLDVWEHAYYLKYQNKRPDYISAFWNVVNWEKVDELYNAAK</sequence>